<proteinExistence type="evidence at transcript level"/>
<comment type="function">
    <text>Removal of H(2)O(2), oxidation of toxic reductants, biosynthesis and degradation of lignin, suberization, auxin catabolism, response to environmental stresses such as wounding, pathogen attack and oxidative stress. These functions might be dependent on each isozyme/isoform in each plant tissue.</text>
</comment>
<comment type="function">
    <text>Involved in defense response to powdery meldew fungus.</text>
</comment>
<comment type="catalytic activity">
    <reaction>
        <text>2 a phenolic donor + H2O2 = 2 a phenolic radical donor + 2 H2O</text>
        <dbReference type="Rhea" id="RHEA:56136"/>
        <dbReference type="ChEBI" id="CHEBI:15377"/>
        <dbReference type="ChEBI" id="CHEBI:16240"/>
        <dbReference type="ChEBI" id="CHEBI:139520"/>
        <dbReference type="ChEBI" id="CHEBI:139521"/>
        <dbReference type="EC" id="1.11.1.7"/>
    </reaction>
</comment>
<comment type="cofactor">
    <cofactor>
        <name>Ca(2+)</name>
        <dbReference type="ChEBI" id="CHEBI:29108"/>
    </cofactor>
    <text>Binds 2 calcium ions per subunit.</text>
</comment>
<comment type="cofactor">
    <cofactor>
        <name>heme b</name>
        <dbReference type="ChEBI" id="CHEBI:60344"/>
    </cofactor>
    <text>Binds 1 heme b (iron(II)-protoporphyrin IX) group per subunit.</text>
</comment>
<comment type="subcellular location">
    <subcellularLocation>
        <location evidence="2">Secreted</location>
    </subcellularLocation>
</comment>
<comment type="similarity">
    <text evidence="2">Belongs to the peroxidase family. Classical plant (class III) peroxidase subfamily.</text>
</comment>
<dbReference type="EC" id="1.11.1.7"/>
<dbReference type="EMBL" id="X58396">
    <property type="protein sequence ID" value="CAA41294.1"/>
    <property type="molecule type" value="mRNA"/>
</dbReference>
<dbReference type="PIR" id="S14611">
    <property type="entry name" value="S14611"/>
</dbReference>
<dbReference type="PIR" id="T06164">
    <property type="entry name" value="T06164"/>
</dbReference>
<dbReference type="SMR" id="P27337"/>
<dbReference type="PeroxiBase" id="69">
    <property type="entry name" value="HvPrx11"/>
</dbReference>
<dbReference type="ExpressionAtlas" id="P27337">
    <property type="expression patterns" value="baseline"/>
</dbReference>
<dbReference type="GO" id="GO:0005576">
    <property type="term" value="C:extracellular region"/>
    <property type="evidence" value="ECO:0007669"/>
    <property type="project" value="UniProtKB-SubCell"/>
</dbReference>
<dbReference type="GO" id="GO:0020037">
    <property type="term" value="F:heme binding"/>
    <property type="evidence" value="ECO:0007669"/>
    <property type="project" value="InterPro"/>
</dbReference>
<dbReference type="GO" id="GO:0140825">
    <property type="term" value="F:lactoperoxidase activity"/>
    <property type="evidence" value="ECO:0007669"/>
    <property type="project" value="UniProtKB-EC"/>
</dbReference>
<dbReference type="GO" id="GO:0046872">
    <property type="term" value="F:metal ion binding"/>
    <property type="evidence" value="ECO:0007669"/>
    <property type="project" value="UniProtKB-KW"/>
</dbReference>
<dbReference type="GO" id="GO:0042744">
    <property type="term" value="P:hydrogen peroxide catabolic process"/>
    <property type="evidence" value="ECO:0007669"/>
    <property type="project" value="UniProtKB-KW"/>
</dbReference>
<dbReference type="GO" id="GO:0006979">
    <property type="term" value="P:response to oxidative stress"/>
    <property type="evidence" value="ECO:0007669"/>
    <property type="project" value="InterPro"/>
</dbReference>
<dbReference type="CDD" id="cd00693">
    <property type="entry name" value="secretory_peroxidase"/>
    <property type="match status" value="1"/>
</dbReference>
<dbReference type="FunFam" id="1.10.420.10:FF:000001">
    <property type="entry name" value="Peroxidase"/>
    <property type="match status" value="1"/>
</dbReference>
<dbReference type="FunFam" id="1.10.520.10:FF:000009">
    <property type="entry name" value="Peroxidase"/>
    <property type="match status" value="1"/>
</dbReference>
<dbReference type="Gene3D" id="1.10.520.10">
    <property type="match status" value="1"/>
</dbReference>
<dbReference type="Gene3D" id="1.10.420.10">
    <property type="entry name" value="Peroxidase, domain 2"/>
    <property type="match status" value="1"/>
</dbReference>
<dbReference type="InterPro" id="IPR002016">
    <property type="entry name" value="Haem_peroxidase"/>
</dbReference>
<dbReference type="InterPro" id="IPR010255">
    <property type="entry name" value="Haem_peroxidase_sf"/>
</dbReference>
<dbReference type="InterPro" id="IPR000823">
    <property type="entry name" value="Peroxidase_pln"/>
</dbReference>
<dbReference type="InterPro" id="IPR019794">
    <property type="entry name" value="Peroxidases_AS"/>
</dbReference>
<dbReference type="InterPro" id="IPR019793">
    <property type="entry name" value="Peroxidases_heam-ligand_BS"/>
</dbReference>
<dbReference type="InterPro" id="IPR033905">
    <property type="entry name" value="Secretory_peroxidase"/>
</dbReference>
<dbReference type="PANTHER" id="PTHR31388:SF280">
    <property type="entry name" value="PEROXIDASE"/>
    <property type="match status" value="1"/>
</dbReference>
<dbReference type="PANTHER" id="PTHR31388">
    <property type="entry name" value="PEROXIDASE 72-RELATED"/>
    <property type="match status" value="1"/>
</dbReference>
<dbReference type="Pfam" id="PF00141">
    <property type="entry name" value="peroxidase"/>
    <property type="match status" value="1"/>
</dbReference>
<dbReference type="PRINTS" id="PR00458">
    <property type="entry name" value="PEROXIDASE"/>
</dbReference>
<dbReference type="PRINTS" id="PR00461">
    <property type="entry name" value="PLPEROXIDASE"/>
</dbReference>
<dbReference type="SUPFAM" id="SSF48113">
    <property type="entry name" value="Heme-dependent peroxidases"/>
    <property type="match status" value="1"/>
</dbReference>
<dbReference type="PROSITE" id="PS00435">
    <property type="entry name" value="PEROXIDASE_1"/>
    <property type="match status" value="1"/>
</dbReference>
<dbReference type="PROSITE" id="PS00436">
    <property type="entry name" value="PEROXIDASE_2"/>
    <property type="match status" value="1"/>
</dbReference>
<dbReference type="PROSITE" id="PS50873">
    <property type="entry name" value="PEROXIDASE_4"/>
    <property type="match status" value="1"/>
</dbReference>
<keyword id="KW-0106">Calcium</keyword>
<keyword id="KW-1015">Disulfide bond</keyword>
<keyword id="KW-0325">Glycoprotein</keyword>
<keyword id="KW-0349">Heme</keyword>
<keyword id="KW-0376">Hydrogen peroxide</keyword>
<keyword id="KW-0408">Iron</keyword>
<keyword id="KW-0479">Metal-binding</keyword>
<keyword id="KW-0560">Oxidoreductase</keyword>
<keyword id="KW-0575">Peroxidase</keyword>
<keyword id="KW-0873">Pyrrolidone carboxylic acid</keyword>
<keyword id="KW-0964">Secreted</keyword>
<keyword id="KW-0732">Signal</keyword>
<sequence>MASSSYTSLLVLVALVTAASAQLSPTFYDTSCPRALATIKSGVMAAVTSDPRMGASLLRLHFHDCFVQGCDASVLLSGMEQNAIPNAGSLRGFGVIDSIKTQIEAICKQTVSCADILTVAARDSVVALGGPSWTVPLGRRDSIDANENEANTDLPGFNSSRAELEAAFLKKGGLNTVDMVALSGAHTIGQAQCSTFRARIYGGDTNINAAYAASLRANCPQTVGSGDGSLANLDTTTANTFDNAYYTNLMSQKGLLHSDQVLFNNDTTDNTVRNFASNPAAFSSSFTTAMIKMGNIAPKTGTQGQIRLSCSRVNS</sequence>
<name>PER1_HORVU</name>
<evidence type="ECO:0000255" key="1"/>
<evidence type="ECO:0000255" key="2">
    <source>
        <dbReference type="PROSITE-ProRule" id="PRU00297"/>
    </source>
</evidence>
<evidence type="ECO:0000255" key="3">
    <source>
        <dbReference type="PROSITE-ProRule" id="PRU10012"/>
    </source>
</evidence>
<reference key="1">
    <citation type="journal article" date="1992" name="Physiol. Mol. Plant Pathol.">
        <title>cDNA cloning and characterization of two barley peroxidase transcripts induced differentially by the powdery mildew fungus Erysiphe graminis.</title>
        <authorList>
            <person name="Thordal-Christensen H."/>
            <person name="Brandt J."/>
            <person name="Cho B.H."/>
            <person name="Rasmussen S.K."/>
            <person name="Gregersen P.L."/>
            <person name="Smedegaard-Petersen V."/>
            <person name="Collinge D.B."/>
        </authorList>
        <dbReference type="AGRICOLA" id="IND93004675"/>
    </citation>
    <scope>NUCLEOTIDE SEQUENCE [MRNA]</scope>
    <source>
        <strain>cv. Pallas / P-01</strain>
        <tissue>Seedling leaf</tissue>
    </source>
</reference>
<accession>P27337</accession>
<organism>
    <name type="scientific">Hordeum vulgare</name>
    <name type="common">Barley</name>
    <dbReference type="NCBI Taxonomy" id="4513"/>
    <lineage>
        <taxon>Eukaryota</taxon>
        <taxon>Viridiplantae</taxon>
        <taxon>Streptophyta</taxon>
        <taxon>Embryophyta</taxon>
        <taxon>Tracheophyta</taxon>
        <taxon>Spermatophyta</taxon>
        <taxon>Magnoliopsida</taxon>
        <taxon>Liliopsida</taxon>
        <taxon>Poales</taxon>
        <taxon>Poaceae</taxon>
        <taxon>BOP clade</taxon>
        <taxon>Pooideae</taxon>
        <taxon>Triticodae</taxon>
        <taxon>Triticeae</taxon>
        <taxon>Hordeinae</taxon>
        <taxon>Hordeum</taxon>
    </lineage>
</organism>
<protein>
    <recommendedName>
        <fullName>Peroxidase 1</fullName>
        <ecNumber>1.11.1.7</ecNumber>
    </recommendedName>
</protein>
<feature type="signal peptide" evidence="1">
    <location>
        <begin position="1"/>
        <end position="21"/>
    </location>
</feature>
<feature type="chain" id="PRO_0000023748" description="Peroxidase 1">
    <location>
        <begin position="22"/>
        <end position="315"/>
    </location>
</feature>
<feature type="active site" description="Proton acceptor" evidence="2 3">
    <location>
        <position position="63"/>
    </location>
</feature>
<feature type="binding site" evidence="2">
    <location>
        <position position="64"/>
    </location>
    <ligand>
        <name>Ca(2+)</name>
        <dbReference type="ChEBI" id="CHEBI:29108"/>
        <label>1</label>
    </ligand>
</feature>
<feature type="binding site" evidence="2">
    <location>
        <position position="67"/>
    </location>
    <ligand>
        <name>Ca(2+)</name>
        <dbReference type="ChEBI" id="CHEBI:29108"/>
        <label>1</label>
    </ligand>
</feature>
<feature type="binding site" evidence="2">
    <location>
        <position position="69"/>
    </location>
    <ligand>
        <name>Ca(2+)</name>
        <dbReference type="ChEBI" id="CHEBI:29108"/>
        <label>1</label>
    </ligand>
</feature>
<feature type="binding site" evidence="2">
    <location>
        <position position="71"/>
    </location>
    <ligand>
        <name>Ca(2+)</name>
        <dbReference type="ChEBI" id="CHEBI:29108"/>
        <label>1</label>
    </ligand>
</feature>
<feature type="binding site" evidence="2">
    <location>
        <position position="73"/>
    </location>
    <ligand>
        <name>Ca(2+)</name>
        <dbReference type="ChEBI" id="CHEBI:29108"/>
        <label>1</label>
    </ligand>
</feature>
<feature type="binding site" evidence="2">
    <location>
        <position position="155"/>
    </location>
    <ligand>
        <name>substrate</name>
    </ligand>
</feature>
<feature type="binding site" description="axial binding residue" evidence="2">
    <location>
        <position position="186"/>
    </location>
    <ligand>
        <name>heme b</name>
        <dbReference type="ChEBI" id="CHEBI:60344"/>
    </ligand>
    <ligandPart>
        <name>Fe</name>
        <dbReference type="ChEBI" id="CHEBI:18248"/>
    </ligandPart>
</feature>
<feature type="binding site" evidence="2">
    <location>
        <position position="187"/>
    </location>
    <ligand>
        <name>Ca(2+)</name>
        <dbReference type="ChEBI" id="CHEBI:29108"/>
        <label>2</label>
    </ligand>
</feature>
<feature type="binding site" evidence="2">
    <location>
        <position position="234"/>
    </location>
    <ligand>
        <name>Ca(2+)</name>
        <dbReference type="ChEBI" id="CHEBI:29108"/>
        <label>2</label>
    </ligand>
</feature>
<feature type="binding site" evidence="2">
    <location>
        <position position="237"/>
    </location>
    <ligand>
        <name>Ca(2+)</name>
        <dbReference type="ChEBI" id="CHEBI:29108"/>
        <label>2</label>
    </ligand>
</feature>
<feature type="binding site" evidence="2">
    <location>
        <position position="242"/>
    </location>
    <ligand>
        <name>Ca(2+)</name>
        <dbReference type="ChEBI" id="CHEBI:29108"/>
        <label>2</label>
    </ligand>
</feature>
<feature type="site" description="Transition state stabilizer" evidence="2">
    <location>
        <position position="59"/>
    </location>
</feature>
<feature type="modified residue" description="Pyrrolidone carboxylic acid" evidence="2">
    <location>
        <position position="22"/>
    </location>
</feature>
<feature type="glycosylation site" description="N-linked (GlcNAc...) asparagine" evidence="1">
    <location>
        <position position="158"/>
    </location>
</feature>
<feature type="glycosylation site" description="N-linked (GlcNAc...) asparagine" evidence="1">
    <location>
        <position position="265"/>
    </location>
</feature>
<feature type="disulfide bond" evidence="2">
    <location>
        <begin position="32"/>
        <end position="107"/>
    </location>
</feature>
<feature type="disulfide bond" evidence="2">
    <location>
        <begin position="65"/>
        <end position="70"/>
    </location>
</feature>
<feature type="disulfide bond" evidence="2">
    <location>
        <begin position="113"/>
        <end position="310"/>
    </location>
</feature>
<feature type="disulfide bond" evidence="2">
    <location>
        <begin position="193"/>
        <end position="219"/>
    </location>
</feature>